<name>Y1444_DICTD</name>
<comment type="similarity">
    <text evidence="1">Belongs to the RemA family.</text>
</comment>
<reference key="1">
    <citation type="journal article" date="2016" name="Front. Microbiol.">
        <title>The complete genome sequence of hyperthermophile Dictyoglomus turgidum DSM 6724 reveals a specialized carbohydrate fermentor.</title>
        <authorList>
            <person name="Brumm P.J."/>
            <person name="Gowda K."/>
            <person name="Robb F.T."/>
            <person name="Mead D.A."/>
        </authorList>
    </citation>
    <scope>NUCLEOTIDE SEQUENCE [LARGE SCALE GENOMIC DNA]</scope>
    <source>
        <strain>DSM 6724 / Z-1310</strain>
    </source>
</reference>
<keyword id="KW-1185">Reference proteome</keyword>
<protein>
    <recommendedName>
        <fullName evidence="1">Putative regulatory protein Dtur_1444</fullName>
    </recommendedName>
</protein>
<evidence type="ECO:0000255" key="1">
    <source>
        <dbReference type="HAMAP-Rule" id="MF_01503"/>
    </source>
</evidence>
<proteinExistence type="inferred from homology"/>
<dbReference type="EMBL" id="CP001251">
    <property type="protein sequence ID" value="ACK42718.1"/>
    <property type="molecule type" value="Genomic_DNA"/>
</dbReference>
<dbReference type="RefSeq" id="WP_012583796.1">
    <property type="nucleotide sequence ID" value="NC_011661.1"/>
</dbReference>
<dbReference type="RefSeq" id="YP_002353332.1">
    <property type="nucleotide sequence ID" value="NC_011661.1"/>
</dbReference>
<dbReference type="SMR" id="B8E0Y1"/>
<dbReference type="FunCoup" id="B8E0Y1">
    <property type="interactions" value="2"/>
</dbReference>
<dbReference type="STRING" id="515635.Dtur_1444"/>
<dbReference type="EnsemblBacteria" id="ACK42718">
    <property type="protein sequence ID" value="ACK42718"/>
    <property type="gene ID" value="Dtur_1444"/>
</dbReference>
<dbReference type="KEGG" id="dtu:Dtur_1444"/>
<dbReference type="PATRIC" id="fig|515635.4.peg.1491"/>
<dbReference type="eggNOG" id="COG2052">
    <property type="taxonomic scope" value="Bacteria"/>
</dbReference>
<dbReference type="HOGENOM" id="CLU_165326_0_0_0"/>
<dbReference type="InParanoid" id="B8E0Y1"/>
<dbReference type="OrthoDB" id="5432174at2"/>
<dbReference type="Proteomes" id="UP000007719">
    <property type="component" value="Chromosome"/>
</dbReference>
<dbReference type="HAMAP" id="MF_01503">
    <property type="entry name" value="RemA"/>
    <property type="match status" value="1"/>
</dbReference>
<dbReference type="InterPro" id="IPR007169">
    <property type="entry name" value="RemA-like"/>
</dbReference>
<dbReference type="NCBIfam" id="NF003315">
    <property type="entry name" value="PRK04323.1"/>
    <property type="match status" value="1"/>
</dbReference>
<dbReference type="PANTHER" id="PTHR38449:SF1">
    <property type="entry name" value="REGULATORY PROTEIN SSL2874-RELATED"/>
    <property type="match status" value="1"/>
</dbReference>
<dbReference type="PANTHER" id="PTHR38449">
    <property type="entry name" value="REGULATORY PROTEIN TM_1690-RELATED"/>
    <property type="match status" value="1"/>
</dbReference>
<dbReference type="Pfam" id="PF04025">
    <property type="entry name" value="RemA-like"/>
    <property type="match status" value="1"/>
</dbReference>
<sequence length="85" mass="9192">MKLINIGFGNMVVSSRIVAIISPDSAPIKRFLSDAKTRNELIDATYGRKTRAVLVLDSGHIVLSALHPETIAARIEGGDKEEESS</sequence>
<feature type="chain" id="PRO_0000373787" description="Putative regulatory protein Dtur_1444">
    <location>
        <begin position="1"/>
        <end position="85"/>
    </location>
</feature>
<gene>
    <name type="ordered locus">Dtur_1444</name>
</gene>
<accession>B8E0Y1</accession>
<organism>
    <name type="scientific">Dictyoglomus turgidum (strain DSM 6724 / Z-1310)</name>
    <dbReference type="NCBI Taxonomy" id="515635"/>
    <lineage>
        <taxon>Bacteria</taxon>
        <taxon>Pseudomonadati</taxon>
        <taxon>Dictyoglomota</taxon>
        <taxon>Dictyoglomia</taxon>
        <taxon>Dictyoglomales</taxon>
        <taxon>Dictyoglomaceae</taxon>
        <taxon>Dictyoglomus</taxon>
    </lineage>
</organism>